<accession>P9WMH4</accession>
<accession>F2GK61</accession>
<accession>L0T8Y5</accession>
<accession>O53922</accession>
<accession>Q7D864</accession>
<protein>
    <recommendedName>
        <fullName>HTH-type transcriptional regulator Cmr</fullName>
    </recommendedName>
</protein>
<feature type="chain" id="PRO_0000427303" description="HTH-type transcriptional regulator Cmr">
    <location>
        <begin position="1"/>
        <end position="244"/>
    </location>
</feature>
<feature type="domain" description="HTH crp-type" evidence="2">
    <location>
        <begin position="174"/>
        <end position="237"/>
    </location>
</feature>
<feature type="DNA-binding region" description="H-T-H motif" evidence="2">
    <location>
        <begin position="197"/>
        <end position="216"/>
    </location>
</feature>
<feature type="binding site">
    <location>
        <begin position="41"/>
        <end position="160"/>
    </location>
    <ligand>
        <name>a nucleoside 3',5'-cyclic phosphate</name>
        <dbReference type="ChEBI" id="CHEBI:58464"/>
    </ligand>
</feature>
<keyword id="KW-0010">Activator</keyword>
<keyword id="KW-0238">DNA-binding</keyword>
<keyword id="KW-1185">Reference proteome</keyword>
<keyword id="KW-0804">Transcription</keyword>
<keyword id="KW-0805">Transcription regulation</keyword>
<reference key="1">
    <citation type="journal article" date="2002" name="J. Bacteriol.">
        <title>Whole-genome comparison of Mycobacterium tuberculosis clinical and laboratory strains.</title>
        <authorList>
            <person name="Fleischmann R.D."/>
            <person name="Alland D."/>
            <person name="Eisen J.A."/>
            <person name="Carpenter L."/>
            <person name="White O."/>
            <person name="Peterson J.D."/>
            <person name="DeBoy R.T."/>
            <person name="Dodson R.J."/>
            <person name="Gwinn M.L."/>
            <person name="Haft D.H."/>
            <person name="Hickey E.K."/>
            <person name="Kolonay J.F."/>
            <person name="Nelson W.C."/>
            <person name="Umayam L.A."/>
            <person name="Ermolaeva M.D."/>
            <person name="Salzberg S.L."/>
            <person name="Delcher A."/>
            <person name="Utterback T.R."/>
            <person name="Weidman J.F."/>
            <person name="Khouri H.M."/>
            <person name="Gill J."/>
            <person name="Mikula A."/>
            <person name="Bishai W."/>
            <person name="Jacobs W.R. Jr."/>
            <person name="Venter J.C."/>
            <person name="Fraser C.M."/>
        </authorList>
    </citation>
    <scope>NUCLEOTIDE SEQUENCE [LARGE SCALE GENOMIC DNA]</scope>
    <source>
        <strain>CDC 1551 / Oshkosh</strain>
    </source>
</reference>
<dbReference type="EMBL" id="AE000516">
    <property type="protein sequence ID" value="AAK45982.1"/>
    <property type="molecule type" value="Genomic_DNA"/>
</dbReference>
<dbReference type="PIR" id="F70818">
    <property type="entry name" value="F70818"/>
</dbReference>
<dbReference type="RefSeq" id="WP_003898967.1">
    <property type="nucleotide sequence ID" value="NZ_KK341227.1"/>
</dbReference>
<dbReference type="SMR" id="P9WMH4"/>
<dbReference type="KEGG" id="mtc:MT1714"/>
<dbReference type="PATRIC" id="fig|83331.31.peg.1840"/>
<dbReference type="HOGENOM" id="CLU_075053_10_0_11"/>
<dbReference type="Proteomes" id="UP000001020">
    <property type="component" value="Chromosome"/>
</dbReference>
<dbReference type="GO" id="GO:0005829">
    <property type="term" value="C:cytosol"/>
    <property type="evidence" value="ECO:0007669"/>
    <property type="project" value="TreeGrafter"/>
</dbReference>
<dbReference type="GO" id="GO:0003677">
    <property type="term" value="F:DNA binding"/>
    <property type="evidence" value="ECO:0007669"/>
    <property type="project" value="UniProtKB-KW"/>
</dbReference>
<dbReference type="GO" id="GO:0003700">
    <property type="term" value="F:DNA-binding transcription factor activity"/>
    <property type="evidence" value="ECO:0007669"/>
    <property type="project" value="TreeGrafter"/>
</dbReference>
<dbReference type="CDD" id="cd00038">
    <property type="entry name" value="CAP_ED"/>
    <property type="match status" value="1"/>
</dbReference>
<dbReference type="Gene3D" id="2.60.120.10">
    <property type="entry name" value="Jelly Rolls"/>
    <property type="match status" value="1"/>
</dbReference>
<dbReference type="Gene3D" id="1.10.10.10">
    <property type="entry name" value="Winged helix-like DNA-binding domain superfamily/Winged helix DNA-binding domain"/>
    <property type="match status" value="1"/>
</dbReference>
<dbReference type="InterPro" id="IPR000595">
    <property type="entry name" value="cNMP-bd_dom"/>
</dbReference>
<dbReference type="InterPro" id="IPR018490">
    <property type="entry name" value="cNMP-bd_dom_sf"/>
</dbReference>
<dbReference type="InterPro" id="IPR050397">
    <property type="entry name" value="Env_Response_Regulators"/>
</dbReference>
<dbReference type="InterPro" id="IPR012318">
    <property type="entry name" value="HTH_CRP"/>
</dbReference>
<dbReference type="InterPro" id="IPR014710">
    <property type="entry name" value="RmlC-like_jellyroll"/>
</dbReference>
<dbReference type="InterPro" id="IPR036388">
    <property type="entry name" value="WH-like_DNA-bd_sf"/>
</dbReference>
<dbReference type="InterPro" id="IPR036390">
    <property type="entry name" value="WH_DNA-bd_sf"/>
</dbReference>
<dbReference type="PANTHER" id="PTHR24567">
    <property type="entry name" value="CRP FAMILY TRANSCRIPTIONAL REGULATORY PROTEIN"/>
    <property type="match status" value="1"/>
</dbReference>
<dbReference type="PANTHER" id="PTHR24567:SF74">
    <property type="entry name" value="HTH-TYPE TRANSCRIPTIONAL REGULATOR ARCR"/>
    <property type="match status" value="1"/>
</dbReference>
<dbReference type="Pfam" id="PF00027">
    <property type="entry name" value="cNMP_binding"/>
    <property type="match status" value="1"/>
</dbReference>
<dbReference type="Pfam" id="PF13545">
    <property type="entry name" value="HTH_Crp_2"/>
    <property type="match status" value="1"/>
</dbReference>
<dbReference type="SMART" id="SM00100">
    <property type="entry name" value="cNMP"/>
    <property type="match status" value="1"/>
</dbReference>
<dbReference type="SMART" id="SM00419">
    <property type="entry name" value="HTH_CRP"/>
    <property type="match status" value="1"/>
</dbReference>
<dbReference type="SUPFAM" id="SSF51206">
    <property type="entry name" value="cAMP-binding domain-like"/>
    <property type="match status" value="1"/>
</dbReference>
<dbReference type="SUPFAM" id="SSF46785">
    <property type="entry name" value="Winged helix' DNA-binding domain"/>
    <property type="match status" value="1"/>
</dbReference>
<dbReference type="PROSITE" id="PS50042">
    <property type="entry name" value="CNMP_BINDING_3"/>
    <property type="match status" value="1"/>
</dbReference>
<dbReference type="PROSITE" id="PS51063">
    <property type="entry name" value="HTH_CRP_2"/>
    <property type="match status" value="1"/>
</dbReference>
<sequence>MADRSVRPLRHLVHAVTGGQPPSEAQVRQAAWIARCVGRGGSAPLHRDDVSALAETLQVKEFAPGAVVFHADQTADGVWIVRHGLIELAVGSRRRRAVVNILHPGDVDGDIPLLLEMPMVYTGRALTQATCLFLDRQAFERLLATHPAIARRWLSSVAQRVSTAQIRLMGMLGRPLPAQVAQLLLDEAIDARIELAQRTLAAMLGAQRPSINKILKEFERDRLITVGYAVIEITDQHGLRARAQ</sequence>
<name>CMR_MYCTO</name>
<gene>
    <name type="primary">cmr</name>
    <name type="ordered locus">MT1714</name>
</gene>
<proteinExistence type="inferred from homology"/>
<organism>
    <name type="scientific">Mycobacterium tuberculosis (strain CDC 1551 / Oshkosh)</name>
    <dbReference type="NCBI Taxonomy" id="83331"/>
    <lineage>
        <taxon>Bacteria</taxon>
        <taxon>Bacillati</taxon>
        <taxon>Actinomycetota</taxon>
        <taxon>Actinomycetes</taxon>
        <taxon>Mycobacteriales</taxon>
        <taxon>Mycobacteriaceae</taxon>
        <taxon>Mycobacterium</taxon>
        <taxon>Mycobacterium tuberculosis complex</taxon>
    </lineage>
</organism>
<comment type="function">
    <text evidence="1">Positively regulates the expression of at least groEL2.</text>
</comment>
<evidence type="ECO:0000250" key="1"/>
<evidence type="ECO:0000255" key="2">
    <source>
        <dbReference type="PROSITE-ProRule" id="PRU00387"/>
    </source>
</evidence>